<proteinExistence type="inferred from homology"/>
<sequence length="557" mass="63086">MGNHKAALTKQVFTFASELYAYGVREVVISPGSRSTPLALAFEAHPNIKTWIHPDERSAAFFAVGLIKGSERPVAILCTSGTAAANYTPAIAESQISRIPLIVLTSDRPHELRSVGAPQAINQVNMFNNYVSYEFDMPIADDSKETINAIYYQMQIASQYLYGPHKGPIHFNLPFRDPLTPDLNATELLTSEMKILPHYQKSIDASALRHILNKKKGLIIVGDMQHQEVDQILTYSTIYDLPILADPLSHLRKFDHPNVICTYDLLFRSGLDLNVDFVIRVGKPVISKKLNQWLKKTDAFQILVQNNDKIDVFPIAPDISYEISANDFFRSLMEDTTINRVSWLEKWQRLEKKGRKEIKCYLEQATDESAFVGELIKKTSEKDALFISNSMPIRDVDNLLLNKNIDVYANRGANGIDGIVSTALGMAVHKRITLLIGDLSFYHDMNGLLMSKLNNIQMNIVLLNNDGGGIFSYLPQKESATDYFERLFGTPTGLDFEYTAKLYQFDFKRFNSVSEFKNATLLSETSTIYELITNREDNFKQHQILYQKLSEMIHGTL</sequence>
<feature type="chain" id="PRO_0000341854" description="2-succinyl-5-enolpyruvyl-6-hydroxy-3-cyclohexene-1-carboxylate synthase">
    <location>
        <begin position="1"/>
        <end position="557"/>
    </location>
</feature>
<protein>
    <recommendedName>
        <fullName evidence="1">2-succinyl-5-enolpyruvyl-6-hydroxy-3-cyclohexene-1-carboxylate synthase</fullName>
        <shortName evidence="1">SEPHCHC synthase</shortName>
        <ecNumber evidence="1">2.2.1.9</ecNumber>
    </recommendedName>
    <alternativeName>
        <fullName evidence="1">Menaquinone biosynthesis protein MenD</fullName>
    </alternativeName>
</protein>
<accession>Q6GAG9</accession>
<reference key="1">
    <citation type="journal article" date="2004" name="Proc. Natl. Acad. Sci. U.S.A.">
        <title>Complete genomes of two clinical Staphylococcus aureus strains: evidence for the rapid evolution of virulence and drug resistance.</title>
        <authorList>
            <person name="Holden M.T.G."/>
            <person name="Feil E.J."/>
            <person name="Lindsay J.A."/>
            <person name="Peacock S.J."/>
            <person name="Day N.P.J."/>
            <person name="Enright M.C."/>
            <person name="Foster T.J."/>
            <person name="Moore C.E."/>
            <person name="Hurst L."/>
            <person name="Atkin R."/>
            <person name="Barron A."/>
            <person name="Bason N."/>
            <person name="Bentley S.D."/>
            <person name="Chillingworth C."/>
            <person name="Chillingworth T."/>
            <person name="Churcher C."/>
            <person name="Clark L."/>
            <person name="Corton C."/>
            <person name="Cronin A."/>
            <person name="Doggett J."/>
            <person name="Dowd L."/>
            <person name="Feltwell T."/>
            <person name="Hance Z."/>
            <person name="Harris B."/>
            <person name="Hauser H."/>
            <person name="Holroyd S."/>
            <person name="Jagels K."/>
            <person name="James K.D."/>
            <person name="Lennard N."/>
            <person name="Line A."/>
            <person name="Mayes R."/>
            <person name="Moule S."/>
            <person name="Mungall K."/>
            <person name="Ormond D."/>
            <person name="Quail M.A."/>
            <person name="Rabbinowitsch E."/>
            <person name="Rutherford K.M."/>
            <person name="Sanders M."/>
            <person name="Sharp S."/>
            <person name="Simmonds M."/>
            <person name="Stevens K."/>
            <person name="Whitehead S."/>
            <person name="Barrell B.G."/>
            <person name="Spratt B.G."/>
            <person name="Parkhill J."/>
        </authorList>
    </citation>
    <scope>NUCLEOTIDE SEQUENCE [LARGE SCALE GENOMIC DNA]</scope>
    <source>
        <strain>MSSA476</strain>
    </source>
</reference>
<evidence type="ECO:0000255" key="1">
    <source>
        <dbReference type="HAMAP-Rule" id="MF_01659"/>
    </source>
</evidence>
<name>MEND_STAAS</name>
<gene>
    <name evidence="1" type="primary">menD</name>
    <name type="ordered locus">SAS0979</name>
</gene>
<organism>
    <name type="scientific">Staphylococcus aureus (strain MSSA476)</name>
    <dbReference type="NCBI Taxonomy" id="282459"/>
    <lineage>
        <taxon>Bacteria</taxon>
        <taxon>Bacillati</taxon>
        <taxon>Bacillota</taxon>
        <taxon>Bacilli</taxon>
        <taxon>Bacillales</taxon>
        <taxon>Staphylococcaceae</taxon>
        <taxon>Staphylococcus</taxon>
    </lineage>
</organism>
<comment type="function">
    <text evidence="1">Catalyzes the thiamine diphosphate-dependent decarboxylation of 2-oxoglutarate and the subsequent addition of the resulting succinic semialdehyde-thiamine pyrophosphate anion to isochorismate to yield 2-succinyl-5-enolpyruvyl-6-hydroxy-3-cyclohexene-1-carboxylate (SEPHCHC).</text>
</comment>
<comment type="catalytic activity">
    <reaction evidence="1">
        <text>isochorismate + 2-oxoglutarate + H(+) = 5-enolpyruvoyl-6-hydroxy-2-succinyl-cyclohex-3-ene-1-carboxylate + CO2</text>
        <dbReference type="Rhea" id="RHEA:25593"/>
        <dbReference type="ChEBI" id="CHEBI:15378"/>
        <dbReference type="ChEBI" id="CHEBI:16526"/>
        <dbReference type="ChEBI" id="CHEBI:16810"/>
        <dbReference type="ChEBI" id="CHEBI:29780"/>
        <dbReference type="ChEBI" id="CHEBI:58818"/>
        <dbReference type="EC" id="2.2.1.9"/>
    </reaction>
</comment>
<comment type="cofactor">
    <cofactor evidence="1">
        <name>Mg(2+)</name>
        <dbReference type="ChEBI" id="CHEBI:18420"/>
    </cofactor>
    <cofactor evidence="1">
        <name>Mn(2+)</name>
        <dbReference type="ChEBI" id="CHEBI:29035"/>
    </cofactor>
</comment>
<comment type="cofactor">
    <cofactor evidence="1">
        <name>thiamine diphosphate</name>
        <dbReference type="ChEBI" id="CHEBI:58937"/>
    </cofactor>
    <text evidence="1">Binds 1 thiamine pyrophosphate per subunit.</text>
</comment>
<comment type="pathway">
    <text evidence="1">Quinol/quinone metabolism; 1,4-dihydroxy-2-naphthoate biosynthesis; 1,4-dihydroxy-2-naphthoate from chorismate: step 2/7.</text>
</comment>
<comment type="pathway">
    <text evidence="1">Quinol/quinone metabolism; menaquinone biosynthesis.</text>
</comment>
<comment type="subunit">
    <text evidence="1">Homodimer.</text>
</comment>
<comment type="similarity">
    <text evidence="1">Belongs to the TPP enzyme family. MenD subfamily.</text>
</comment>
<dbReference type="EC" id="2.2.1.9" evidence="1"/>
<dbReference type="EMBL" id="BX571857">
    <property type="protein sequence ID" value="CAG42754.1"/>
    <property type="molecule type" value="Genomic_DNA"/>
</dbReference>
<dbReference type="RefSeq" id="WP_000526696.1">
    <property type="nucleotide sequence ID" value="NC_002953.3"/>
</dbReference>
<dbReference type="SMR" id="Q6GAG9"/>
<dbReference type="KEGG" id="sas:SAS0979"/>
<dbReference type="HOGENOM" id="CLU_006051_3_0_9"/>
<dbReference type="UniPathway" id="UPA00079"/>
<dbReference type="UniPathway" id="UPA01057">
    <property type="reaction ID" value="UER00164"/>
</dbReference>
<dbReference type="GO" id="GO:0070204">
    <property type="term" value="F:2-succinyl-5-enolpyruvyl-6-hydroxy-3-cyclohexene-1-carboxylic-acid synthase activity"/>
    <property type="evidence" value="ECO:0007669"/>
    <property type="project" value="UniProtKB-UniRule"/>
</dbReference>
<dbReference type="GO" id="GO:0000287">
    <property type="term" value="F:magnesium ion binding"/>
    <property type="evidence" value="ECO:0007669"/>
    <property type="project" value="UniProtKB-UniRule"/>
</dbReference>
<dbReference type="GO" id="GO:0030145">
    <property type="term" value="F:manganese ion binding"/>
    <property type="evidence" value="ECO:0007669"/>
    <property type="project" value="UniProtKB-UniRule"/>
</dbReference>
<dbReference type="GO" id="GO:0030976">
    <property type="term" value="F:thiamine pyrophosphate binding"/>
    <property type="evidence" value="ECO:0007669"/>
    <property type="project" value="UniProtKB-UniRule"/>
</dbReference>
<dbReference type="GO" id="GO:0009234">
    <property type="term" value="P:menaquinone biosynthetic process"/>
    <property type="evidence" value="ECO:0007669"/>
    <property type="project" value="UniProtKB-UniRule"/>
</dbReference>
<dbReference type="CDD" id="cd07037">
    <property type="entry name" value="TPP_PYR_MenD"/>
    <property type="match status" value="1"/>
</dbReference>
<dbReference type="CDD" id="cd02009">
    <property type="entry name" value="TPP_SHCHC_synthase"/>
    <property type="match status" value="1"/>
</dbReference>
<dbReference type="Gene3D" id="3.40.50.970">
    <property type="match status" value="2"/>
</dbReference>
<dbReference type="Gene3D" id="3.40.50.1220">
    <property type="entry name" value="TPP-binding domain"/>
    <property type="match status" value="1"/>
</dbReference>
<dbReference type="HAMAP" id="MF_01659">
    <property type="entry name" value="MenD"/>
    <property type="match status" value="1"/>
</dbReference>
<dbReference type="InterPro" id="IPR004433">
    <property type="entry name" value="MenaQ_synth_MenD"/>
</dbReference>
<dbReference type="InterPro" id="IPR032264">
    <property type="entry name" value="MenD_middle"/>
</dbReference>
<dbReference type="InterPro" id="IPR029061">
    <property type="entry name" value="THDP-binding"/>
</dbReference>
<dbReference type="InterPro" id="IPR012001">
    <property type="entry name" value="Thiamin_PyroP_enz_TPP-bd_dom"/>
</dbReference>
<dbReference type="InterPro" id="IPR011766">
    <property type="entry name" value="TPP_enzyme_TPP-bd"/>
</dbReference>
<dbReference type="NCBIfam" id="TIGR00173">
    <property type="entry name" value="menD"/>
    <property type="match status" value="1"/>
</dbReference>
<dbReference type="PANTHER" id="PTHR42916">
    <property type="entry name" value="2-SUCCINYL-5-ENOLPYRUVYL-6-HYDROXY-3-CYCLOHEXENE-1-CARBOXYLATE SYNTHASE"/>
    <property type="match status" value="1"/>
</dbReference>
<dbReference type="PANTHER" id="PTHR42916:SF1">
    <property type="entry name" value="PROTEIN PHYLLO, CHLOROPLASTIC"/>
    <property type="match status" value="1"/>
</dbReference>
<dbReference type="Pfam" id="PF02775">
    <property type="entry name" value="TPP_enzyme_C"/>
    <property type="match status" value="1"/>
</dbReference>
<dbReference type="Pfam" id="PF16582">
    <property type="entry name" value="TPP_enzyme_M_2"/>
    <property type="match status" value="1"/>
</dbReference>
<dbReference type="Pfam" id="PF02776">
    <property type="entry name" value="TPP_enzyme_N"/>
    <property type="match status" value="1"/>
</dbReference>
<dbReference type="PIRSF" id="PIRSF004983">
    <property type="entry name" value="MenD"/>
    <property type="match status" value="1"/>
</dbReference>
<dbReference type="SUPFAM" id="SSF52518">
    <property type="entry name" value="Thiamin diphosphate-binding fold (THDP-binding)"/>
    <property type="match status" value="2"/>
</dbReference>
<keyword id="KW-0460">Magnesium</keyword>
<keyword id="KW-0464">Manganese</keyword>
<keyword id="KW-0474">Menaquinone biosynthesis</keyword>
<keyword id="KW-0479">Metal-binding</keyword>
<keyword id="KW-0786">Thiamine pyrophosphate</keyword>
<keyword id="KW-0808">Transferase</keyword>